<evidence type="ECO:0000255" key="1">
    <source>
        <dbReference type="HAMAP-Rule" id="MF_01389"/>
    </source>
</evidence>
<keyword id="KW-0143">Chaperone</keyword>
<keyword id="KW-0963">Cytoplasm</keyword>
<keyword id="KW-0342">GTP-binding</keyword>
<keyword id="KW-0996">Nickel insertion</keyword>
<keyword id="KW-0547">Nucleotide-binding</keyword>
<sequence length="225" mass="24541">MRHGHPPTDIHHGINQGEPMDDNVLRVGIGGPVGSGKTALIEALVPVLIERGHRPAVITNDIYTQEDAQHVRRTLAGVLEPERVVGVETGACPHTAVRDDPTMNLAAGAEMLERFPDTDTLLYESGGDNLTLTFSPALVDLFLFVLDTAEGEKMPRKRGPGITESDLLVINKIDIAQYVRTDIGIMEADAHRVRDDRPVVLTDCLTGVGIDDIALYLESRRKVLI</sequence>
<dbReference type="EMBL" id="AP009493">
    <property type="protein sequence ID" value="BAG17673.1"/>
    <property type="molecule type" value="Genomic_DNA"/>
</dbReference>
<dbReference type="SMR" id="B1VSW9"/>
<dbReference type="KEGG" id="sgr:SGR_844"/>
<dbReference type="eggNOG" id="COG0378">
    <property type="taxonomic scope" value="Bacteria"/>
</dbReference>
<dbReference type="HOGENOM" id="CLU_072144_1_0_11"/>
<dbReference type="Proteomes" id="UP000001685">
    <property type="component" value="Chromosome"/>
</dbReference>
<dbReference type="GO" id="GO:0005737">
    <property type="term" value="C:cytoplasm"/>
    <property type="evidence" value="ECO:0007669"/>
    <property type="project" value="UniProtKB-SubCell"/>
</dbReference>
<dbReference type="GO" id="GO:0005525">
    <property type="term" value="F:GTP binding"/>
    <property type="evidence" value="ECO:0007669"/>
    <property type="project" value="UniProtKB-KW"/>
</dbReference>
<dbReference type="GO" id="GO:0003924">
    <property type="term" value="F:GTPase activity"/>
    <property type="evidence" value="ECO:0007669"/>
    <property type="project" value="InterPro"/>
</dbReference>
<dbReference type="GO" id="GO:0016151">
    <property type="term" value="F:nickel cation binding"/>
    <property type="evidence" value="ECO:0007669"/>
    <property type="project" value="UniProtKB-UniRule"/>
</dbReference>
<dbReference type="GO" id="GO:0043419">
    <property type="term" value="P:urea catabolic process"/>
    <property type="evidence" value="ECO:0007669"/>
    <property type="project" value="InterPro"/>
</dbReference>
<dbReference type="Gene3D" id="3.40.50.300">
    <property type="entry name" value="P-loop containing nucleotide triphosphate hydrolases"/>
    <property type="match status" value="1"/>
</dbReference>
<dbReference type="HAMAP" id="MF_01389">
    <property type="entry name" value="UreG"/>
    <property type="match status" value="1"/>
</dbReference>
<dbReference type="InterPro" id="IPR003495">
    <property type="entry name" value="CobW/HypB/UreG_nucleotide-bd"/>
</dbReference>
<dbReference type="InterPro" id="IPR027417">
    <property type="entry name" value="P-loop_NTPase"/>
</dbReference>
<dbReference type="InterPro" id="IPR004400">
    <property type="entry name" value="UreG"/>
</dbReference>
<dbReference type="NCBIfam" id="TIGR00101">
    <property type="entry name" value="ureG"/>
    <property type="match status" value="1"/>
</dbReference>
<dbReference type="PANTHER" id="PTHR31715">
    <property type="entry name" value="UREASE ACCESSORY PROTEIN G"/>
    <property type="match status" value="1"/>
</dbReference>
<dbReference type="PANTHER" id="PTHR31715:SF0">
    <property type="entry name" value="UREASE ACCESSORY PROTEIN G"/>
    <property type="match status" value="1"/>
</dbReference>
<dbReference type="Pfam" id="PF02492">
    <property type="entry name" value="cobW"/>
    <property type="match status" value="1"/>
</dbReference>
<dbReference type="PIRSF" id="PIRSF005624">
    <property type="entry name" value="Ni-bind_GTPase"/>
    <property type="match status" value="1"/>
</dbReference>
<dbReference type="SUPFAM" id="SSF52540">
    <property type="entry name" value="P-loop containing nucleoside triphosphate hydrolases"/>
    <property type="match status" value="1"/>
</dbReference>
<comment type="function">
    <text evidence="1">Facilitates the functional incorporation of the urease nickel metallocenter. This process requires GTP hydrolysis, probably effectuated by UreG.</text>
</comment>
<comment type="subunit">
    <text evidence="1">Homodimer. UreD, UreF and UreG form a complex that acts as a GTP-hydrolysis-dependent molecular chaperone, activating the urease apoprotein by helping to assemble the nickel containing metallocenter of UreC. The UreE protein probably delivers the nickel.</text>
</comment>
<comment type="subcellular location">
    <subcellularLocation>
        <location evidence="1">Cytoplasm</location>
    </subcellularLocation>
</comment>
<comment type="similarity">
    <text evidence="1">Belongs to the SIMIBI class G3E GTPase family. UreG subfamily.</text>
</comment>
<proteinExistence type="inferred from homology"/>
<organism>
    <name type="scientific">Streptomyces griseus subsp. griseus (strain JCM 4626 / CBS 651.72 / NBRC 13350 / KCC S-0626 / ISP 5235)</name>
    <dbReference type="NCBI Taxonomy" id="455632"/>
    <lineage>
        <taxon>Bacteria</taxon>
        <taxon>Bacillati</taxon>
        <taxon>Actinomycetota</taxon>
        <taxon>Actinomycetes</taxon>
        <taxon>Kitasatosporales</taxon>
        <taxon>Streptomycetaceae</taxon>
        <taxon>Streptomyces</taxon>
    </lineage>
</organism>
<feature type="chain" id="PRO_0000347451" description="Urease accessory protein UreG 2">
    <location>
        <begin position="1"/>
        <end position="225"/>
    </location>
</feature>
<feature type="binding site" evidence="1">
    <location>
        <begin position="31"/>
        <end position="38"/>
    </location>
    <ligand>
        <name>GTP</name>
        <dbReference type="ChEBI" id="CHEBI:37565"/>
    </ligand>
</feature>
<name>UREG2_STRGG</name>
<protein>
    <recommendedName>
        <fullName evidence="1">Urease accessory protein UreG 2</fullName>
    </recommendedName>
</protein>
<accession>B1VSW9</accession>
<gene>
    <name evidence="1" type="primary">ureG2</name>
    <name type="ordered locus">SGR_844</name>
</gene>
<reference key="1">
    <citation type="journal article" date="2008" name="J. Bacteriol.">
        <title>Genome sequence of the streptomycin-producing microorganism Streptomyces griseus IFO 13350.</title>
        <authorList>
            <person name="Ohnishi Y."/>
            <person name="Ishikawa J."/>
            <person name="Hara H."/>
            <person name="Suzuki H."/>
            <person name="Ikenoya M."/>
            <person name="Ikeda H."/>
            <person name="Yamashita A."/>
            <person name="Hattori M."/>
            <person name="Horinouchi S."/>
        </authorList>
    </citation>
    <scope>NUCLEOTIDE SEQUENCE [LARGE SCALE GENOMIC DNA]</scope>
    <source>
        <strain>JCM 4626 / CBS 651.72 / NBRC 13350 / KCC S-0626 / ISP 5235</strain>
    </source>
</reference>